<sequence length="85" mass="9091">MAHKKGQGSSRNGRDSPGQRRGIKVYGSEKVVAGNILVRQVGTLVHPGQNVGMGKDFTLFALIDGTVKYSRTRGDRRVVSVLPGA</sequence>
<keyword id="KW-0687">Ribonucleoprotein</keyword>
<keyword id="KW-0689">Ribosomal protein</keyword>
<organism>
    <name type="scientific">Anaeromyxobacter sp. (strain K)</name>
    <dbReference type="NCBI Taxonomy" id="447217"/>
    <lineage>
        <taxon>Bacteria</taxon>
        <taxon>Pseudomonadati</taxon>
        <taxon>Myxococcota</taxon>
        <taxon>Myxococcia</taxon>
        <taxon>Myxococcales</taxon>
        <taxon>Cystobacterineae</taxon>
        <taxon>Anaeromyxobacteraceae</taxon>
        <taxon>Anaeromyxobacter</taxon>
    </lineage>
</organism>
<protein>
    <recommendedName>
        <fullName evidence="1">Large ribosomal subunit protein bL27</fullName>
    </recommendedName>
    <alternativeName>
        <fullName evidence="3">50S ribosomal protein L27</fullName>
    </alternativeName>
</protein>
<feature type="chain" id="PRO_1000128688" description="Large ribosomal subunit protein bL27">
    <location>
        <begin position="1"/>
        <end position="85"/>
    </location>
</feature>
<feature type="region of interest" description="Disordered" evidence="2">
    <location>
        <begin position="1"/>
        <end position="22"/>
    </location>
</feature>
<comment type="similarity">
    <text evidence="1">Belongs to the bacterial ribosomal protein bL27 family.</text>
</comment>
<dbReference type="EMBL" id="CP001131">
    <property type="protein sequence ID" value="ACG75515.1"/>
    <property type="molecule type" value="Genomic_DNA"/>
</dbReference>
<dbReference type="RefSeq" id="WP_011423227.1">
    <property type="nucleotide sequence ID" value="NC_011145.1"/>
</dbReference>
<dbReference type="SMR" id="B4UIU3"/>
<dbReference type="KEGG" id="ank:AnaeK_4312"/>
<dbReference type="HOGENOM" id="CLU_095424_4_0_7"/>
<dbReference type="OrthoDB" id="9803474at2"/>
<dbReference type="Proteomes" id="UP000001871">
    <property type="component" value="Chromosome"/>
</dbReference>
<dbReference type="GO" id="GO:0022625">
    <property type="term" value="C:cytosolic large ribosomal subunit"/>
    <property type="evidence" value="ECO:0007669"/>
    <property type="project" value="TreeGrafter"/>
</dbReference>
<dbReference type="GO" id="GO:0003735">
    <property type="term" value="F:structural constituent of ribosome"/>
    <property type="evidence" value="ECO:0007669"/>
    <property type="project" value="InterPro"/>
</dbReference>
<dbReference type="GO" id="GO:0006412">
    <property type="term" value="P:translation"/>
    <property type="evidence" value="ECO:0007669"/>
    <property type="project" value="UniProtKB-UniRule"/>
</dbReference>
<dbReference type="FunFam" id="2.40.50.100:FF:000060">
    <property type="entry name" value="Apicoplast ribosomal protein L27"/>
    <property type="match status" value="1"/>
</dbReference>
<dbReference type="Gene3D" id="2.40.50.100">
    <property type="match status" value="1"/>
</dbReference>
<dbReference type="HAMAP" id="MF_00539">
    <property type="entry name" value="Ribosomal_bL27"/>
    <property type="match status" value="1"/>
</dbReference>
<dbReference type="InterPro" id="IPR001684">
    <property type="entry name" value="Ribosomal_bL27"/>
</dbReference>
<dbReference type="NCBIfam" id="TIGR00062">
    <property type="entry name" value="L27"/>
    <property type="match status" value="1"/>
</dbReference>
<dbReference type="PANTHER" id="PTHR15893:SF0">
    <property type="entry name" value="LARGE RIBOSOMAL SUBUNIT PROTEIN BL27M"/>
    <property type="match status" value="1"/>
</dbReference>
<dbReference type="PANTHER" id="PTHR15893">
    <property type="entry name" value="RIBOSOMAL PROTEIN L27"/>
    <property type="match status" value="1"/>
</dbReference>
<dbReference type="Pfam" id="PF01016">
    <property type="entry name" value="Ribosomal_L27"/>
    <property type="match status" value="1"/>
</dbReference>
<dbReference type="PRINTS" id="PR00063">
    <property type="entry name" value="RIBOSOMALL27"/>
</dbReference>
<dbReference type="SUPFAM" id="SSF110324">
    <property type="entry name" value="Ribosomal L27 protein-like"/>
    <property type="match status" value="1"/>
</dbReference>
<gene>
    <name evidence="1" type="primary">rpmA</name>
    <name type="ordered locus">AnaeK_4312</name>
</gene>
<reference key="1">
    <citation type="submission" date="2008-08" db="EMBL/GenBank/DDBJ databases">
        <title>Complete sequence of Anaeromyxobacter sp. K.</title>
        <authorList>
            <consortium name="US DOE Joint Genome Institute"/>
            <person name="Lucas S."/>
            <person name="Copeland A."/>
            <person name="Lapidus A."/>
            <person name="Glavina del Rio T."/>
            <person name="Dalin E."/>
            <person name="Tice H."/>
            <person name="Bruce D."/>
            <person name="Goodwin L."/>
            <person name="Pitluck S."/>
            <person name="Saunders E."/>
            <person name="Brettin T."/>
            <person name="Detter J.C."/>
            <person name="Han C."/>
            <person name="Larimer F."/>
            <person name="Land M."/>
            <person name="Hauser L."/>
            <person name="Kyrpides N."/>
            <person name="Ovchinnikiva G."/>
            <person name="Beliaev A."/>
        </authorList>
    </citation>
    <scope>NUCLEOTIDE SEQUENCE [LARGE SCALE GENOMIC DNA]</scope>
    <source>
        <strain>K</strain>
    </source>
</reference>
<evidence type="ECO:0000255" key="1">
    <source>
        <dbReference type="HAMAP-Rule" id="MF_00539"/>
    </source>
</evidence>
<evidence type="ECO:0000256" key="2">
    <source>
        <dbReference type="SAM" id="MobiDB-lite"/>
    </source>
</evidence>
<evidence type="ECO:0000305" key="3"/>
<name>RL27_ANASK</name>
<accession>B4UIU3</accession>
<proteinExistence type="inferred from homology"/>